<feature type="chain" id="PRO_1000045317" description="Probable transcriptional regulatory protein HS_0508">
    <location>
        <begin position="1"/>
        <end position="246"/>
    </location>
</feature>
<proteinExistence type="inferred from homology"/>
<keyword id="KW-0963">Cytoplasm</keyword>
<keyword id="KW-0238">DNA-binding</keyword>
<keyword id="KW-0804">Transcription</keyword>
<keyword id="KW-0805">Transcription regulation</keyword>
<protein>
    <recommendedName>
        <fullName evidence="1">Probable transcriptional regulatory protein HS_0508</fullName>
    </recommendedName>
</protein>
<accession>Q0I244</accession>
<comment type="subcellular location">
    <subcellularLocation>
        <location evidence="1">Cytoplasm</location>
    </subcellularLocation>
</comment>
<comment type="similarity">
    <text evidence="1">Belongs to the TACO1 family.</text>
</comment>
<gene>
    <name type="ordered locus">HS_0508</name>
</gene>
<evidence type="ECO:0000255" key="1">
    <source>
        <dbReference type="HAMAP-Rule" id="MF_00693"/>
    </source>
</evidence>
<reference key="1">
    <citation type="journal article" date="2007" name="J. Bacteriol.">
        <title>Complete genome sequence of Haemophilus somnus (Histophilus somni) strain 129Pt and comparison to Haemophilus ducreyi 35000HP and Haemophilus influenzae Rd.</title>
        <authorList>
            <person name="Challacombe J.F."/>
            <person name="Duncan A.J."/>
            <person name="Brettin T.S."/>
            <person name="Bruce D."/>
            <person name="Chertkov O."/>
            <person name="Detter J.C."/>
            <person name="Han C.S."/>
            <person name="Misra M."/>
            <person name="Richardson P."/>
            <person name="Tapia R."/>
            <person name="Thayer N."/>
            <person name="Xie G."/>
            <person name="Inzana T.J."/>
        </authorList>
    </citation>
    <scope>NUCLEOTIDE SEQUENCE [LARGE SCALE GENOMIC DNA]</scope>
    <source>
        <strain>129Pt</strain>
    </source>
</reference>
<sequence>MAGHSKWANIKHRKAAQDAQRGKIFTKLIRELVTAAKLGGGDVGANPRLRAAVDKALSNNMTRDTINRAIERGVGGGDGTNMETRIYEGYGPGGTAVMVECLSDNANRTISQVRPSFTKCGGNLGTEGSVGYLFSKKGLILVESADEDALTEAAIEAGADDIQVQEDGSVEIYTAWEDLGLVKDGIEVVGFKVVNAEVTMIPSTMVDLDAETAPKLLRLIDMLEDCDDVQNVYHNGEISDEVAALL</sequence>
<organism>
    <name type="scientific">Histophilus somni (strain 129Pt)</name>
    <name type="common">Haemophilus somnus</name>
    <dbReference type="NCBI Taxonomy" id="205914"/>
    <lineage>
        <taxon>Bacteria</taxon>
        <taxon>Pseudomonadati</taxon>
        <taxon>Pseudomonadota</taxon>
        <taxon>Gammaproteobacteria</taxon>
        <taxon>Pasteurellales</taxon>
        <taxon>Pasteurellaceae</taxon>
        <taxon>Histophilus</taxon>
    </lineage>
</organism>
<name>Y508_HISS1</name>
<dbReference type="EMBL" id="CP000436">
    <property type="protein sequence ID" value="ABI24785.1"/>
    <property type="molecule type" value="Genomic_DNA"/>
</dbReference>
<dbReference type="SMR" id="Q0I244"/>
<dbReference type="KEGG" id="hso:HS_0508"/>
<dbReference type="eggNOG" id="COG0217">
    <property type="taxonomic scope" value="Bacteria"/>
</dbReference>
<dbReference type="HOGENOM" id="CLU_062974_2_2_6"/>
<dbReference type="GO" id="GO:0005829">
    <property type="term" value="C:cytosol"/>
    <property type="evidence" value="ECO:0007669"/>
    <property type="project" value="TreeGrafter"/>
</dbReference>
<dbReference type="GO" id="GO:0003677">
    <property type="term" value="F:DNA binding"/>
    <property type="evidence" value="ECO:0007669"/>
    <property type="project" value="UniProtKB-UniRule"/>
</dbReference>
<dbReference type="GO" id="GO:0006355">
    <property type="term" value="P:regulation of DNA-templated transcription"/>
    <property type="evidence" value="ECO:0007669"/>
    <property type="project" value="UniProtKB-UniRule"/>
</dbReference>
<dbReference type="FunFam" id="1.10.10.200:FF:000001">
    <property type="entry name" value="Probable transcriptional regulatory protein YebC"/>
    <property type="match status" value="1"/>
</dbReference>
<dbReference type="FunFam" id="3.30.70.980:FF:000002">
    <property type="entry name" value="Probable transcriptional regulatory protein YebC"/>
    <property type="match status" value="1"/>
</dbReference>
<dbReference type="Gene3D" id="1.10.10.200">
    <property type="match status" value="1"/>
</dbReference>
<dbReference type="Gene3D" id="3.30.70.980">
    <property type="match status" value="2"/>
</dbReference>
<dbReference type="HAMAP" id="MF_00693">
    <property type="entry name" value="Transcrip_reg_TACO1"/>
    <property type="match status" value="1"/>
</dbReference>
<dbReference type="InterPro" id="IPR017856">
    <property type="entry name" value="Integrase-like_N"/>
</dbReference>
<dbReference type="InterPro" id="IPR048300">
    <property type="entry name" value="TACO1_YebC-like_2nd/3rd_dom"/>
</dbReference>
<dbReference type="InterPro" id="IPR049083">
    <property type="entry name" value="TACO1_YebC_N"/>
</dbReference>
<dbReference type="InterPro" id="IPR002876">
    <property type="entry name" value="Transcrip_reg_TACO1-like"/>
</dbReference>
<dbReference type="InterPro" id="IPR026564">
    <property type="entry name" value="Transcrip_reg_TACO1-like_dom3"/>
</dbReference>
<dbReference type="InterPro" id="IPR029072">
    <property type="entry name" value="YebC-like"/>
</dbReference>
<dbReference type="NCBIfam" id="NF001030">
    <property type="entry name" value="PRK00110.1"/>
    <property type="match status" value="1"/>
</dbReference>
<dbReference type="NCBIfam" id="NF009044">
    <property type="entry name" value="PRK12378.1"/>
    <property type="match status" value="1"/>
</dbReference>
<dbReference type="NCBIfam" id="TIGR01033">
    <property type="entry name" value="YebC/PmpR family DNA-binding transcriptional regulator"/>
    <property type="match status" value="1"/>
</dbReference>
<dbReference type="PANTHER" id="PTHR12532:SF6">
    <property type="entry name" value="TRANSCRIPTIONAL REGULATORY PROTEIN YEBC-RELATED"/>
    <property type="match status" value="1"/>
</dbReference>
<dbReference type="PANTHER" id="PTHR12532">
    <property type="entry name" value="TRANSLATIONAL ACTIVATOR OF CYTOCHROME C OXIDASE 1"/>
    <property type="match status" value="1"/>
</dbReference>
<dbReference type="Pfam" id="PF20772">
    <property type="entry name" value="TACO1_YebC_N"/>
    <property type="match status" value="1"/>
</dbReference>
<dbReference type="Pfam" id="PF01709">
    <property type="entry name" value="Transcrip_reg"/>
    <property type="match status" value="1"/>
</dbReference>
<dbReference type="SUPFAM" id="SSF75625">
    <property type="entry name" value="YebC-like"/>
    <property type="match status" value="1"/>
</dbReference>